<name>SYR_CLOBH</name>
<keyword id="KW-0030">Aminoacyl-tRNA synthetase</keyword>
<keyword id="KW-0067">ATP-binding</keyword>
<keyword id="KW-0963">Cytoplasm</keyword>
<keyword id="KW-0436">Ligase</keyword>
<keyword id="KW-0547">Nucleotide-binding</keyword>
<keyword id="KW-0648">Protein biosynthesis</keyword>
<keyword id="KW-1185">Reference proteome</keyword>
<reference key="1">
    <citation type="journal article" date="2007" name="Genome Res.">
        <title>Genome sequence of a proteolytic (Group I) Clostridium botulinum strain Hall A and comparative analysis of the clostridial genomes.</title>
        <authorList>
            <person name="Sebaihia M."/>
            <person name="Peck M.W."/>
            <person name="Minton N.P."/>
            <person name="Thomson N.R."/>
            <person name="Holden M.T.G."/>
            <person name="Mitchell W.J."/>
            <person name="Carter A.T."/>
            <person name="Bentley S.D."/>
            <person name="Mason D.R."/>
            <person name="Crossman L."/>
            <person name="Paul C.J."/>
            <person name="Ivens A."/>
            <person name="Wells-Bennik M.H.J."/>
            <person name="Davis I.J."/>
            <person name="Cerdeno-Tarraga A.M."/>
            <person name="Churcher C."/>
            <person name="Quail M.A."/>
            <person name="Chillingworth T."/>
            <person name="Feltwell T."/>
            <person name="Fraser A."/>
            <person name="Goodhead I."/>
            <person name="Hance Z."/>
            <person name="Jagels K."/>
            <person name="Larke N."/>
            <person name="Maddison M."/>
            <person name="Moule S."/>
            <person name="Mungall K."/>
            <person name="Norbertczak H."/>
            <person name="Rabbinowitsch E."/>
            <person name="Sanders M."/>
            <person name="Simmonds M."/>
            <person name="White B."/>
            <person name="Whithead S."/>
            <person name="Parkhill J."/>
        </authorList>
    </citation>
    <scope>NUCLEOTIDE SEQUENCE [LARGE SCALE GENOMIC DNA]</scope>
    <source>
        <strain>Hall / ATCC 3502 / NCTC 13319 / Type A</strain>
    </source>
</reference>
<reference key="2">
    <citation type="journal article" date="2007" name="PLoS ONE">
        <title>Analysis of the neurotoxin complex genes in Clostridium botulinum A1-A4 and B1 strains: BoNT/A3, /Ba4 and /B1 clusters are located within plasmids.</title>
        <authorList>
            <person name="Smith T.J."/>
            <person name="Hill K.K."/>
            <person name="Foley B.T."/>
            <person name="Detter J.C."/>
            <person name="Munk A.C."/>
            <person name="Bruce D.C."/>
            <person name="Doggett N.A."/>
            <person name="Smith L.A."/>
            <person name="Marks J.D."/>
            <person name="Xie G."/>
            <person name="Brettin T.S."/>
        </authorList>
    </citation>
    <scope>NUCLEOTIDE SEQUENCE [LARGE SCALE GENOMIC DNA]</scope>
    <source>
        <strain>Hall / ATCC 3502 / NCTC 13319 / Type A</strain>
    </source>
</reference>
<comment type="catalytic activity">
    <reaction evidence="1">
        <text>tRNA(Arg) + L-arginine + ATP = L-arginyl-tRNA(Arg) + AMP + diphosphate</text>
        <dbReference type="Rhea" id="RHEA:20301"/>
        <dbReference type="Rhea" id="RHEA-COMP:9658"/>
        <dbReference type="Rhea" id="RHEA-COMP:9673"/>
        <dbReference type="ChEBI" id="CHEBI:30616"/>
        <dbReference type="ChEBI" id="CHEBI:32682"/>
        <dbReference type="ChEBI" id="CHEBI:33019"/>
        <dbReference type="ChEBI" id="CHEBI:78442"/>
        <dbReference type="ChEBI" id="CHEBI:78513"/>
        <dbReference type="ChEBI" id="CHEBI:456215"/>
        <dbReference type="EC" id="6.1.1.19"/>
    </reaction>
</comment>
<comment type="subunit">
    <text evidence="1">Monomer.</text>
</comment>
<comment type="subcellular location">
    <subcellularLocation>
        <location evidence="1">Cytoplasm</location>
    </subcellularLocation>
</comment>
<comment type="similarity">
    <text evidence="1">Belongs to the class-I aminoacyl-tRNA synthetase family.</text>
</comment>
<sequence length="563" mass="63868">MDYKNLVAERIKENTELEVDLIEKLIEIPPKKEMGDYAFPCFQLAKTFRKAPNLIAEELKEKINKEGFEKVVTVGPYLNFFVDKTILIKDVLEKVLSEKEKYGSSKVGEGKNVVVEYSSPNIAKPFHIGHLFTTAIGNALYKILSFEGYNCIGINHLGDWGTQFGKLISAYRRWVDEEALEKDAIGELLRIYVKFHGEAEKDPELEKEARLNFKRLEEGSEEETELWNRFKDLSLKEFNKVYDMLGIKFDSLAGESFYSDKMDAVVQEIDDKGLLVDSNGAKVVMLDEYNMPPCMIKKSDGATIYATRDLAAAIYRKKTYDFHKCIYVVGTPQALHFKQVFTTLKLMGHDWADDCKHVGFGLVKLANKKLSTRNGDVVFLEDLLNQSVEETLKIINEKNPNLKNKGDVAKKLGIGAVVFTYLKNNRERDIVFDWKEILSFDGETGPYVEYSYARGKSILRKAGELTGEADYSKLSSKEEFELAKLLGGFNDAIMNAIDKLEPAMVTRYVIEVAKAFNKFYNAHGILNAEDNDVKLARVKLVEATCQVIKNALNLLGIDVVEEM</sequence>
<protein>
    <recommendedName>
        <fullName evidence="1">Arginine--tRNA ligase</fullName>
        <ecNumber evidence="1">6.1.1.19</ecNumber>
    </recommendedName>
    <alternativeName>
        <fullName evidence="1">Arginyl-tRNA synthetase</fullName>
        <shortName evidence="1">ArgRS</shortName>
    </alternativeName>
</protein>
<organism>
    <name type="scientific">Clostridium botulinum (strain Hall / ATCC 3502 / NCTC 13319 / Type A)</name>
    <dbReference type="NCBI Taxonomy" id="441771"/>
    <lineage>
        <taxon>Bacteria</taxon>
        <taxon>Bacillati</taxon>
        <taxon>Bacillota</taxon>
        <taxon>Clostridia</taxon>
        <taxon>Eubacteriales</taxon>
        <taxon>Clostridiaceae</taxon>
        <taxon>Clostridium</taxon>
    </lineage>
</organism>
<evidence type="ECO:0000255" key="1">
    <source>
        <dbReference type="HAMAP-Rule" id="MF_00123"/>
    </source>
</evidence>
<proteinExistence type="inferred from homology"/>
<dbReference type="EC" id="6.1.1.19" evidence="1"/>
<dbReference type="EMBL" id="CP000727">
    <property type="protein sequence ID" value="ABS36212.1"/>
    <property type="molecule type" value="Genomic_DNA"/>
</dbReference>
<dbReference type="EMBL" id="AM412317">
    <property type="protein sequence ID" value="CAL82626.1"/>
    <property type="molecule type" value="Genomic_DNA"/>
</dbReference>
<dbReference type="RefSeq" id="WP_011948742.1">
    <property type="nucleotide sequence ID" value="NC_009698.1"/>
</dbReference>
<dbReference type="RefSeq" id="YP_001253603.1">
    <property type="nucleotide sequence ID" value="NC_009495.1"/>
</dbReference>
<dbReference type="RefSeq" id="YP_001386991.1">
    <property type="nucleotide sequence ID" value="NC_009698.1"/>
</dbReference>
<dbReference type="SMR" id="A5I0R5"/>
<dbReference type="GeneID" id="5185327"/>
<dbReference type="KEGG" id="cbh:CLC_1124"/>
<dbReference type="KEGG" id="cbo:CBO1072"/>
<dbReference type="PATRIC" id="fig|413999.7.peg.1067"/>
<dbReference type="HOGENOM" id="CLU_006406_6_1_9"/>
<dbReference type="PRO" id="PR:A5I0R5"/>
<dbReference type="Proteomes" id="UP000001986">
    <property type="component" value="Chromosome"/>
</dbReference>
<dbReference type="GO" id="GO:0005737">
    <property type="term" value="C:cytoplasm"/>
    <property type="evidence" value="ECO:0007669"/>
    <property type="project" value="UniProtKB-SubCell"/>
</dbReference>
<dbReference type="GO" id="GO:0004814">
    <property type="term" value="F:arginine-tRNA ligase activity"/>
    <property type="evidence" value="ECO:0000318"/>
    <property type="project" value="GO_Central"/>
</dbReference>
<dbReference type="GO" id="GO:0005524">
    <property type="term" value="F:ATP binding"/>
    <property type="evidence" value="ECO:0007669"/>
    <property type="project" value="UniProtKB-UniRule"/>
</dbReference>
<dbReference type="GO" id="GO:0006420">
    <property type="term" value="P:arginyl-tRNA aminoacylation"/>
    <property type="evidence" value="ECO:0000318"/>
    <property type="project" value="GO_Central"/>
</dbReference>
<dbReference type="CDD" id="cd07956">
    <property type="entry name" value="Anticodon_Ia_Arg"/>
    <property type="match status" value="1"/>
</dbReference>
<dbReference type="CDD" id="cd00671">
    <property type="entry name" value="ArgRS_core"/>
    <property type="match status" value="1"/>
</dbReference>
<dbReference type="FunFam" id="1.10.730.10:FF:000008">
    <property type="entry name" value="Arginine--tRNA ligase"/>
    <property type="match status" value="1"/>
</dbReference>
<dbReference type="FunFam" id="3.30.1360.70:FF:000005">
    <property type="entry name" value="Arginine--tRNA ligase"/>
    <property type="match status" value="1"/>
</dbReference>
<dbReference type="FunFam" id="3.40.50.620:FF:000116">
    <property type="entry name" value="Arginine--tRNA ligase"/>
    <property type="match status" value="1"/>
</dbReference>
<dbReference type="Gene3D" id="3.30.1360.70">
    <property type="entry name" value="Arginyl tRNA synthetase N-terminal domain"/>
    <property type="match status" value="1"/>
</dbReference>
<dbReference type="Gene3D" id="3.40.50.620">
    <property type="entry name" value="HUPs"/>
    <property type="match status" value="1"/>
</dbReference>
<dbReference type="Gene3D" id="1.10.730.10">
    <property type="entry name" value="Isoleucyl-tRNA Synthetase, Domain 1"/>
    <property type="match status" value="1"/>
</dbReference>
<dbReference type="HAMAP" id="MF_00123">
    <property type="entry name" value="Arg_tRNA_synth"/>
    <property type="match status" value="1"/>
</dbReference>
<dbReference type="InterPro" id="IPR001412">
    <property type="entry name" value="aa-tRNA-synth_I_CS"/>
</dbReference>
<dbReference type="InterPro" id="IPR001278">
    <property type="entry name" value="Arg-tRNA-ligase"/>
</dbReference>
<dbReference type="InterPro" id="IPR005148">
    <property type="entry name" value="Arg-tRNA-synth_N"/>
</dbReference>
<dbReference type="InterPro" id="IPR036695">
    <property type="entry name" value="Arg-tRNA-synth_N_sf"/>
</dbReference>
<dbReference type="InterPro" id="IPR035684">
    <property type="entry name" value="ArgRS_core"/>
</dbReference>
<dbReference type="InterPro" id="IPR008909">
    <property type="entry name" value="DALR_anticod-bd"/>
</dbReference>
<dbReference type="InterPro" id="IPR014729">
    <property type="entry name" value="Rossmann-like_a/b/a_fold"/>
</dbReference>
<dbReference type="InterPro" id="IPR009080">
    <property type="entry name" value="tRNAsynth_Ia_anticodon-bd"/>
</dbReference>
<dbReference type="NCBIfam" id="TIGR00456">
    <property type="entry name" value="argS"/>
    <property type="match status" value="1"/>
</dbReference>
<dbReference type="PANTHER" id="PTHR11956:SF5">
    <property type="entry name" value="ARGININE--TRNA LIGASE, CYTOPLASMIC"/>
    <property type="match status" value="1"/>
</dbReference>
<dbReference type="PANTHER" id="PTHR11956">
    <property type="entry name" value="ARGINYL-TRNA SYNTHETASE"/>
    <property type="match status" value="1"/>
</dbReference>
<dbReference type="Pfam" id="PF03485">
    <property type="entry name" value="Arg_tRNA_synt_N"/>
    <property type="match status" value="1"/>
</dbReference>
<dbReference type="Pfam" id="PF05746">
    <property type="entry name" value="DALR_1"/>
    <property type="match status" value="1"/>
</dbReference>
<dbReference type="Pfam" id="PF00750">
    <property type="entry name" value="tRNA-synt_1d"/>
    <property type="match status" value="1"/>
</dbReference>
<dbReference type="PRINTS" id="PR01038">
    <property type="entry name" value="TRNASYNTHARG"/>
</dbReference>
<dbReference type="SMART" id="SM01016">
    <property type="entry name" value="Arg_tRNA_synt_N"/>
    <property type="match status" value="1"/>
</dbReference>
<dbReference type="SMART" id="SM00836">
    <property type="entry name" value="DALR_1"/>
    <property type="match status" value="1"/>
</dbReference>
<dbReference type="SUPFAM" id="SSF47323">
    <property type="entry name" value="Anticodon-binding domain of a subclass of class I aminoacyl-tRNA synthetases"/>
    <property type="match status" value="1"/>
</dbReference>
<dbReference type="SUPFAM" id="SSF55190">
    <property type="entry name" value="Arginyl-tRNA synthetase (ArgRS), N-terminal 'additional' domain"/>
    <property type="match status" value="1"/>
</dbReference>
<dbReference type="SUPFAM" id="SSF52374">
    <property type="entry name" value="Nucleotidylyl transferase"/>
    <property type="match status" value="1"/>
</dbReference>
<dbReference type="PROSITE" id="PS00178">
    <property type="entry name" value="AA_TRNA_LIGASE_I"/>
    <property type="match status" value="1"/>
</dbReference>
<accession>A5I0R5</accession>
<accession>A7G2H6</accession>
<gene>
    <name evidence="1" type="primary">argS</name>
    <name type="ordered locus">CBO1072</name>
    <name type="ordered locus">CLC_1124</name>
</gene>
<feature type="chain" id="PRO_1000018016" description="Arginine--tRNA ligase">
    <location>
        <begin position="1"/>
        <end position="563"/>
    </location>
</feature>
<feature type="short sequence motif" description="'HIGH' region">
    <location>
        <begin position="120"/>
        <end position="130"/>
    </location>
</feature>